<dbReference type="EC" id="3.5.1.130" evidence="1"/>
<dbReference type="EC" id="3.5.1.132" evidence="1"/>
<dbReference type="EMBL" id="AP006878">
    <property type="protein sequence ID" value="BAD84463.1"/>
    <property type="molecule type" value="Genomic_DNA"/>
</dbReference>
<dbReference type="RefSeq" id="WP_011249229.1">
    <property type="nucleotide sequence ID" value="NC_006624.1"/>
</dbReference>
<dbReference type="SMR" id="Q5JFW4"/>
<dbReference type="STRING" id="69014.TK0274"/>
<dbReference type="EnsemblBacteria" id="BAD84463">
    <property type="protein sequence ID" value="BAD84463"/>
    <property type="gene ID" value="TK0274"/>
</dbReference>
<dbReference type="GeneID" id="78446776"/>
<dbReference type="KEGG" id="tko:TK0274"/>
<dbReference type="PATRIC" id="fig|69014.16.peg.273"/>
<dbReference type="eggNOG" id="arCOG01107">
    <property type="taxonomic scope" value="Archaea"/>
</dbReference>
<dbReference type="HOGENOM" id="CLU_021802_2_0_2"/>
<dbReference type="InParanoid" id="Q5JFW4"/>
<dbReference type="OrthoDB" id="24854at2157"/>
<dbReference type="PhylomeDB" id="Q5JFW4"/>
<dbReference type="UniPathway" id="UPA00033">
    <property type="reaction ID" value="UER00039"/>
</dbReference>
<dbReference type="UniPathway" id="UPA00068"/>
<dbReference type="Proteomes" id="UP000000536">
    <property type="component" value="Chromosome"/>
</dbReference>
<dbReference type="GO" id="GO:0005737">
    <property type="term" value="C:cytoplasm"/>
    <property type="evidence" value="ECO:0007669"/>
    <property type="project" value="UniProtKB-SubCell"/>
</dbReference>
<dbReference type="GO" id="GO:0050897">
    <property type="term" value="F:cobalt ion binding"/>
    <property type="evidence" value="ECO:0007669"/>
    <property type="project" value="UniProtKB-UniRule"/>
</dbReference>
<dbReference type="GO" id="GO:0016811">
    <property type="term" value="F:hydrolase activity, acting on carbon-nitrogen (but not peptide) bonds, in linear amides"/>
    <property type="evidence" value="ECO:0007669"/>
    <property type="project" value="UniProtKB-UniRule"/>
</dbReference>
<dbReference type="GO" id="GO:0008270">
    <property type="term" value="F:zinc ion binding"/>
    <property type="evidence" value="ECO:0007669"/>
    <property type="project" value="UniProtKB-UniRule"/>
</dbReference>
<dbReference type="GO" id="GO:0042450">
    <property type="term" value="P:arginine biosynthetic process via ornithine"/>
    <property type="evidence" value="ECO:0007669"/>
    <property type="project" value="UniProtKB-UniRule"/>
</dbReference>
<dbReference type="GO" id="GO:0006526">
    <property type="term" value="P:L-arginine biosynthetic process"/>
    <property type="evidence" value="ECO:0007669"/>
    <property type="project" value="UniProtKB-UniPathway"/>
</dbReference>
<dbReference type="GO" id="GO:0019878">
    <property type="term" value="P:lysine biosynthetic process via aminoadipic acid"/>
    <property type="evidence" value="ECO:0007669"/>
    <property type="project" value="UniProtKB-UniRule"/>
</dbReference>
<dbReference type="Gene3D" id="3.40.630.10">
    <property type="entry name" value="Zn peptidases"/>
    <property type="match status" value="2"/>
</dbReference>
<dbReference type="HAMAP" id="MF_01120">
    <property type="entry name" value="LysK"/>
    <property type="match status" value="1"/>
</dbReference>
<dbReference type="InterPro" id="IPR001261">
    <property type="entry name" value="ArgE/DapE_CS"/>
</dbReference>
<dbReference type="InterPro" id="IPR010175">
    <property type="entry name" value="LysK"/>
</dbReference>
<dbReference type="InterPro" id="IPR002933">
    <property type="entry name" value="Peptidase_M20"/>
</dbReference>
<dbReference type="InterPro" id="IPR050072">
    <property type="entry name" value="Peptidase_M20A"/>
</dbReference>
<dbReference type="InterPro" id="IPR008007">
    <property type="entry name" value="Peptidase_M42"/>
</dbReference>
<dbReference type="NCBIfam" id="TIGR01902">
    <property type="entry name" value="dapE-lys-deAc"/>
    <property type="match status" value="1"/>
</dbReference>
<dbReference type="NCBIfam" id="NF003367">
    <property type="entry name" value="PRK04443.1"/>
    <property type="match status" value="1"/>
</dbReference>
<dbReference type="PANTHER" id="PTHR43808:SF28">
    <property type="entry name" value="[LYSW]-LYSINE_[LYSW]-ORNITHINE HYDROLASE"/>
    <property type="match status" value="1"/>
</dbReference>
<dbReference type="PANTHER" id="PTHR43808">
    <property type="entry name" value="ACETYLORNITHINE DEACETYLASE"/>
    <property type="match status" value="1"/>
</dbReference>
<dbReference type="Pfam" id="PF01546">
    <property type="entry name" value="Peptidase_M20"/>
    <property type="match status" value="1"/>
</dbReference>
<dbReference type="PIRSF" id="PIRSF001123">
    <property type="entry name" value="PepA_GA"/>
    <property type="match status" value="1"/>
</dbReference>
<dbReference type="SUPFAM" id="SSF53187">
    <property type="entry name" value="Zn-dependent exopeptidases"/>
    <property type="match status" value="1"/>
</dbReference>
<dbReference type="PROSITE" id="PS00758">
    <property type="entry name" value="ARGE_DAPE_CPG2_1"/>
    <property type="match status" value="1"/>
</dbReference>
<feature type="chain" id="PRO_0000185349" description="Putative [LysW]-lysine/[LysW]-ornithine hydrolase">
    <location>
        <begin position="1"/>
        <end position="344"/>
    </location>
</feature>
<feature type="active site" evidence="1">
    <location>
        <position position="68"/>
    </location>
</feature>
<feature type="active site" description="Proton acceptor" evidence="1">
    <location>
        <position position="117"/>
    </location>
</feature>
<feature type="binding site" evidence="1">
    <location>
        <position position="66"/>
    </location>
    <ligand>
        <name>Zn(2+)</name>
        <dbReference type="ChEBI" id="CHEBI:29105"/>
        <label>1</label>
    </ligand>
</feature>
<feature type="binding site" evidence="1">
    <location>
        <position position="90"/>
    </location>
    <ligand>
        <name>Zn(2+)</name>
        <dbReference type="ChEBI" id="CHEBI:29105"/>
        <label>1</label>
    </ligand>
</feature>
<feature type="binding site" evidence="1">
    <location>
        <position position="90"/>
    </location>
    <ligand>
        <name>Zn(2+)</name>
        <dbReference type="ChEBI" id="CHEBI:29105"/>
        <label>2</label>
    </ligand>
</feature>
<feature type="binding site" evidence="1">
    <location>
        <position position="118"/>
    </location>
    <ligand>
        <name>Zn(2+)</name>
        <dbReference type="ChEBI" id="CHEBI:29105"/>
        <label>2</label>
    </ligand>
</feature>
<feature type="binding site" evidence="1">
    <location>
        <position position="139"/>
    </location>
    <ligand>
        <name>Zn(2+)</name>
        <dbReference type="ChEBI" id="CHEBI:29105"/>
        <label>1</label>
    </ligand>
</feature>
<feature type="binding site" evidence="1">
    <location>
        <position position="297"/>
    </location>
    <ligand>
        <name>Zn(2+)</name>
        <dbReference type="ChEBI" id="CHEBI:29105"/>
        <label>2</label>
    </ligand>
</feature>
<comment type="function">
    <text evidence="1">Catalyzes the release of L-lysine from [LysW]-gamma-L-lysine and the release of L-ornithine from [LysW]-L-ornithine.</text>
</comment>
<comment type="catalytic activity">
    <reaction evidence="1">
        <text>[amino-group carrier protein]-C-terminal-gamma-(L-lysyl)-L-glutamate + H2O = [amino-group carrier protein]-C-terminal-L-glutamate + L-lysine</text>
        <dbReference type="Rhea" id="RHEA:48684"/>
        <dbReference type="Rhea" id="RHEA-COMP:9693"/>
        <dbReference type="Rhea" id="RHEA-COMP:9715"/>
        <dbReference type="ChEBI" id="CHEBI:15377"/>
        <dbReference type="ChEBI" id="CHEBI:32551"/>
        <dbReference type="ChEBI" id="CHEBI:78525"/>
        <dbReference type="ChEBI" id="CHEBI:78526"/>
        <dbReference type="EC" id="3.5.1.130"/>
    </reaction>
</comment>
<comment type="catalytic activity">
    <reaction evidence="1">
        <text>[amino-group carrier protein]-C-terminal-gamma-(L-ornithyl)-L-glutamate + H2O = [amino-group carrier protein]-C-terminal-L-glutamate + L-ornithine</text>
        <dbReference type="Rhea" id="RHEA:52676"/>
        <dbReference type="Rhea" id="RHEA-COMP:9693"/>
        <dbReference type="Rhea" id="RHEA-COMP:13328"/>
        <dbReference type="ChEBI" id="CHEBI:15377"/>
        <dbReference type="ChEBI" id="CHEBI:46911"/>
        <dbReference type="ChEBI" id="CHEBI:78525"/>
        <dbReference type="ChEBI" id="CHEBI:136763"/>
        <dbReference type="EC" id="3.5.1.132"/>
    </reaction>
</comment>
<comment type="cofactor">
    <cofactor evidence="1">
        <name>Zn(2+)</name>
        <dbReference type="ChEBI" id="CHEBI:29105"/>
    </cofactor>
    <cofactor evidence="1">
        <name>Co(2+)</name>
        <dbReference type="ChEBI" id="CHEBI:48828"/>
    </cofactor>
    <text evidence="1">Binds 2 Zn(2+) or Co(2+) ions per subunit.</text>
</comment>
<comment type="pathway">
    <text evidence="1">Amino-acid biosynthesis; L-lysine biosynthesis via AAA pathway; L-lysine from L-alpha-aminoadipate (Thermus route): step 5/5.</text>
</comment>
<comment type="pathway">
    <text evidence="1">Amino-acid biosynthesis; L-arginine biosynthesis.</text>
</comment>
<comment type="subcellular location">
    <subcellularLocation>
        <location evidence="1">Cytoplasm</location>
    </subcellularLocation>
</comment>
<comment type="similarity">
    <text evidence="1">Belongs to the peptidase M20A family. LysK subfamily.</text>
</comment>
<proteinExistence type="inferred from homology"/>
<keyword id="KW-0028">Amino-acid biosynthesis</keyword>
<keyword id="KW-0055">Arginine biosynthesis</keyword>
<keyword id="KW-0170">Cobalt</keyword>
<keyword id="KW-0963">Cytoplasm</keyword>
<keyword id="KW-0378">Hydrolase</keyword>
<keyword id="KW-0457">Lysine biosynthesis</keyword>
<keyword id="KW-0479">Metal-binding</keyword>
<keyword id="KW-1185">Reference proteome</keyword>
<keyword id="KW-0862">Zinc</keyword>
<accession>Q5JFW4</accession>
<name>LYSK_THEKO</name>
<reference key="1">
    <citation type="journal article" date="2005" name="Genome Res.">
        <title>Complete genome sequence of the hyperthermophilic archaeon Thermococcus kodakaraensis KOD1 and comparison with Pyrococcus genomes.</title>
        <authorList>
            <person name="Fukui T."/>
            <person name="Atomi H."/>
            <person name="Kanai T."/>
            <person name="Matsumi R."/>
            <person name="Fujiwara S."/>
            <person name="Imanaka T."/>
        </authorList>
    </citation>
    <scope>NUCLEOTIDE SEQUENCE [LARGE SCALE GENOMIC DNA]</scope>
    <source>
        <strain>ATCC BAA-918 / JCM 12380 / KOD1</strain>
    </source>
</reference>
<protein>
    <recommendedName>
        <fullName evidence="1">Putative [LysW]-lysine/[LysW]-ornithine hydrolase</fullName>
        <ecNumber evidence="1">3.5.1.130</ecNumber>
        <ecNumber evidence="1">3.5.1.132</ecNumber>
    </recommendedName>
</protein>
<gene>
    <name evidence="1" type="primary">lysK</name>
    <name type="ordered locus">TK0274</name>
</gene>
<sequence>MISSEEKVEFLRKLVEIYSPTGRESEAVKFIVESFESFGVDAYVDEVGNAIAIREGKGPRILLAGHVDTVPGIIPVRIEDGVLWGRGSVDAKGPLATFFFATLESNANIIFAGLVDEEGFSKGAKNLDVPRPDYIIIGEPSGVDGVTIGYKGSLTAKFVESVEKVHGSLGVDAAERLINRWLEIKSSFGEGFDALSGRIVELHAYERDFDFYGEMVINLRTPPGYNPPKGWEILDFVPAYQVDRRSPLVRAFVRGIRRNGMRPRLKKKTGTADMNILGPRFGVDAVAYGPGDSRLDHTPHERISLSEYLLAIDVLVDVIEELKGAKERAAEESGEREAGKALSG</sequence>
<organism>
    <name type="scientific">Thermococcus kodakarensis (strain ATCC BAA-918 / JCM 12380 / KOD1)</name>
    <name type="common">Pyrococcus kodakaraensis (strain KOD1)</name>
    <dbReference type="NCBI Taxonomy" id="69014"/>
    <lineage>
        <taxon>Archaea</taxon>
        <taxon>Methanobacteriati</taxon>
        <taxon>Methanobacteriota</taxon>
        <taxon>Thermococci</taxon>
        <taxon>Thermococcales</taxon>
        <taxon>Thermococcaceae</taxon>
        <taxon>Thermococcus</taxon>
    </lineage>
</organism>
<evidence type="ECO:0000255" key="1">
    <source>
        <dbReference type="HAMAP-Rule" id="MF_01120"/>
    </source>
</evidence>